<gene>
    <name evidence="1" type="primary">sfsA</name>
    <name type="ordered locus">Ping_0711</name>
</gene>
<organism>
    <name type="scientific">Psychromonas ingrahamii (strain DSM 17664 / CCUG 51855 / 37)</name>
    <dbReference type="NCBI Taxonomy" id="357804"/>
    <lineage>
        <taxon>Bacteria</taxon>
        <taxon>Pseudomonadati</taxon>
        <taxon>Pseudomonadota</taxon>
        <taxon>Gammaproteobacteria</taxon>
        <taxon>Alteromonadales</taxon>
        <taxon>Psychromonadaceae</taxon>
        <taxon>Psychromonas</taxon>
    </lineage>
</organism>
<evidence type="ECO:0000255" key="1">
    <source>
        <dbReference type="HAMAP-Rule" id="MF_00095"/>
    </source>
</evidence>
<proteinExistence type="inferred from homology"/>
<name>SFSA_PSYIN</name>
<comment type="similarity">
    <text evidence="1">Belongs to the SfsA family.</text>
</comment>
<dbReference type="EMBL" id="CP000510">
    <property type="protein sequence ID" value="ABM02563.1"/>
    <property type="molecule type" value="Genomic_DNA"/>
</dbReference>
<dbReference type="RefSeq" id="WP_011769122.1">
    <property type="nucleotide sequence ID" value="NC_008709.1"/>
</dbReference>
<dbReference type="SMR" id="A1SSU8"/>
<dbReference type="STRING" id="357804.Ping_0711"/>
<dbReference type="KEGG" id="pin:Ping_0711"/>
<dbReference type="eggNOG" id="COG1489">
    <property type="taxonomic scope" value="Bacteria"/>
</dbReference>
<dbReference type="HOGENOM" id="CLU_052299_2_0_6"/>
<dbReference type="OrthoDB" id="9802365at2"/>
<dbReference type="Proteomes" id="UP000000639">
    <property type="component" value="Chromosome"/>
</dbReference>
<dbReference type="GO" id="GO:0003677">
    <property type="term" value="F:DNA binding"/>
    <property type="evidence" value="ECO:0007669"/>
    <property type="project" value="InterPro"/>
</dbReference>
<dbReference type="CDD" id="cd22359">
    <property type="entry name" value="SfsA-like_bacterial"/>
    <property type="match status" value="1"/>
</dbReference>
<dbReference type="FunFam" id="2.40.50.580:FF:000001">
    <property type="entry name" value="Sugar fermentation stimulation protein A"/>
    <property type="match status" value="1"/>
</dbReference>
<dbReference type="FunFam" id="3.40.1350.60:FF:000001">
    <property type="entry name" value="Sugar fermentation stimulation protein A"/>
    <property type="match status" value="1"/>
</dbReference>
<dbReference type="Gene3D" id="2.40.50.580">
    <property type="match status" value="1"/>
</dbReference>
<dbReference type="Gene3D" id="3.40.1350.60">
    <property type="match status" value="1"/>
</dbReference>
<dbReference type="HAMAP" id="MF_00095">
    <property type="entry name" value="SfsA"/>
    <property type="match status" value="1"/>
</dbReference>
<dbReference type="InterPro" id="IPR005224">
    <property type="entry name" value="SfsA"/>
</dbReference>
<dbReference type="InterPro" id="IPR040452">
    <property type="entry name" value="SfsA_C"/>
</dbReference>
<dbReference type="InterPro" id="IPR041465">
    <property type="entry name" value="SfsA_N"/>
</dbReference>
<dbReference type="NCBIfam" id="TIGR00230">
    <property type="entry name" value="sfsA"/>
    <property type="match status" value="1"/>
</dbReference>
<dbReference type="PANTHER" id="PTHR30545">
    <property type="entry name" value="SUGAR FERMENTATION STIMULATION PROTEIN A"/>
    <property type="match status" value="1"/>
</dbReference>
<dbReference type="PANTHER" id="PTHR30545:SF2">
    <property type="entry name" value="SUGAR FERMENTATION STIMULATION PROTEIN A"/>
    <property type="match status" value="1"/>
</dbReference>
<dbReference type="Pfam" id="PF03749">
    <property type="entry name" value="SfsA"/>
    <property type="match status" value="1"/>
</dbReference>
<dbReference type="Pfam" id="PF17746">
    <property type="entry name" value="SfsA_N"/>
    <property type="match status" value="1"/>
</dbReference>
<accession>A1SSU8</accession>
<keyword id="KW-1185">Reference proteome</keyword>
<protein>
    <recommendedName>
        <fullName evidence="1">Sugar fermentation stimulation protein homolog</fullName>
    </recommendedName>
</protein>
<feature type="chain" id="PRO_0000340151" description="Sugar fermentation stimulation protein homolog">
    <location>
        <begin position="1"/>
        <end position="228"/>
    </location>
</feature>
<reference key="1">
    <citation type="journal article" date="2008" name="BMC Genomics">
        <title>Genomics of an extreme psychrophile, Psychromonas ingrahamii.</title>
        <authorList>
            <person name="Riley M."/>
            <person name="Staley J.T."/>
            <person name="Danchin A."/>
            <person name="Wang T.Z."/>
            <person name="Brettin T.S."/>
            <person name="Hauser L.J."/>
            <person name="Land M.L."/>
            <person name="Thompson L.S."/>
        </authorList>
    </citation>
    <scope>NUCLEOTIDE SEQUENCE [LARGE SCALE GENOMIC DNA]</scope>
    <source>
        <strain>DSM 17664 / CCUG 51855 / 37</strain>
    </source>
</reference>
<sequence>MFENLQKAILIRRYKRFLADIELHNGNVLTIYCPNTGAMTGCAEPGDQVWYSTSNNLKRKYKYTWELTFTKGGHWICVNTARANQLVKEALHNSEIEALSGYSQIKAEVKYGTENSRIDFLLSNENKADCYVEVKSCTLLEQPLAEGKGFFPDTVTTRGQKHLRELIEMKQQGHRSVLLFAVLHSGIKSVQAAGHLDVKYAQLFEQAKKAGVEVYCYYPELTLPCLEE</sequence>